<accession>Q75WE7</accession>
<comment type="function">
    <text evidence="1">May play a role in tumorigenesis as a tumor suppressor. Altered expression of this protein and disruption of the molecular pathway it is involved in may contribute directly to or modify tumorigenesis (By similarity).</text>
</comment>
<organism>
    <name type="scientific">Rattus norvegicus</name>
    <name type="common">Rat</name>
    <dbReference type="NCBI Taxonomy" id="10116"/>
    <lineage>
        <taxon>Eukaryota</taxon>
        <taxon>Metazoa</taxon>
        <taxon>Chordata</taxon>
        <taxon>Craniata</taxon>
        <taxon>Vertebrata</taxon>
        <taxon>Euteleostomi</taxon>
        <taxon>Mammalia</taxon>
        <taxon>Eutheria</taxon>
        <taxon>Euarchontoglires</taxon>
        <taxon>Glires</taxon>
        <taxon>Rodentia</taxon>
        <taxon>Myomorpha</taxon>
        <taxon>Muroidea</taxon>
        <taxon>Muridae</taxon>
        <taxon>Murinae</taxon>
        <taxon>Rattus</taxon>
    </lineage>
</organism>
<reference key="1">
    <citation type="submission" date="2003-10" db="EMBL/GenBank/DDBJ databases">
        <title>Mast cell surface antigen-1 (Masa-1); a novel marker for mast cell activation.</title>
        <authorList>
            <person name="Matsui T."/>
            <person name="Takagi H."/>
            <person name="Shiono H."/>
            <person name="Sakai J."/>
            <person name="Isaka K."/>
            <person name="Matsui S."/>
            <person name="Morishita M."/>
            <person name="Kondo K."/>
            <person name="Kato S."/>
            <person name="Sugiyama H."/>
            <person name="Shibata M."/>
            <person name="Atsumi F."/>
            <person name="Okada T."/>
        </authorList>
    </citation>
    <scope>NUCLEOTIDE SEQUENCE [MRNA]</scope>
</reference>
<sequence length="822" mass="91483">MEHHWGLITGNKEKVPLKSISVTLSINDFVAAVAATLHYENEEKVPIEAMFVFPMDEDSAVYSFEALVDGKKIVAELQDKTKAHSKYEEALSQGHQAYLLEEDDYSRDVFSCNVGNLQPGTKVAVTLRYVQELPLESDGALRYLLPAVLNPRYQLSEQSASSCLNVQKPIVPLEALPYTLSMVATITSQHGIERVQSNCSLSPIQYLTDDKTSAQVSLTEGHKFDRDVELLIYYREVHSPSVAVEKGMQDKKRDSLMGAPCAMVSFYPDIPEVNASKVCGEFVFLMDRSGSMQTPMRTEENSQLRIEAAKETLLLLLKSLPMGCYFNIYGFGSSYEQFFPESVKYTQETIEEAVERVKRLDADLGGTEILTPLRNIYKTSSIPGHPLQLFVFTDGEVSDTYSVIREVKLNSKKHRCFSFGIGQGASTSLIKNIARVSGGTAEFITGKDRMQAKALGSLKLALQCALDDISLSWELPPGLSVNMLSPEQPTIFRGQRLIIYAQLTGPMPQAESRGAVCLKHTLQGKSLENKVAFSLQPKENANFTIHRLAAKFLIQTKDLGSHEVSKEEKKDVMNISLQSGVLSSFTAFVAINKELNKPVQGPLAHRVIPRPMIATSTSMFMRSCSRLTGPFKNSRLKRRLCAADYVPYGHESTVYSSMPSPAPIENQGVADSSNEKSNSQNEHKAFGENVVLQLIFLQNANGSWKLDENLTKILGTTLEDTKAANPSQHGDPSAWATILAVLWLHANGQDLKCEWELLERKAVAWLHDHAGRGTTPPPFPSFHLHPREPCLYVLQRTQESLWLSQLCCLRTLSLQLILHFQD</sequence>
<keyword id="KW-1185">Reference proteome</keyword>
<keyword id="KW-0043">Tumor suppressor</keyword>
<gene>
    <name type="primary">Vwa5a</name>
    <name type="synonym">Loh11cr2a</name>
    <name type="synonym">Masa1</name>
</gene>
<name>VWA5A_RAT</name>
<feature type="chain" id="PRO_0000084413" description="von Willebrand factor A domain-containing protein 5A">
    <location>
        <begin position="1"/>
        <end position="822"/>
    </location>
</feature>
<feature type="domain" description="VIT" evidence="3">
    <location>
        <begin position="1"/>
        <end position="131"/>
    </location>
</feature>
<feature type="domain" description="VWFA" evidence="2">
    <location>
        <begin position="281"/>
        <end position="469"/>
    </location>
</feature>
<feature type="region of interest" description="Disordered" evidence="4">
    <location>
        <begin position="657"/>
        <end position="682"/>
    </location>
</feature>
<feature type="compositionally biased region" description="Polar residues" evidence="4">
    <location>
        <begin position="669"/>
        <end position="680"/>
    </location>
</feature>
<dbReference type="EMBL" id="AB121446">
    <property type="protein sequence ID" value="BAC98429.1"/>
    <property type="molecule type" value="mRNA"/>
</dbReference>
<dbReference type="RefSeq" id="NP_942050.1">
    <property type="nucleotide sequence ID" value="NM_198755.1"/>
</dbReference>
<dbReference type="RefSeq" id="XP_006235564.1">
    <property type="nucleotide sequence ID" value="XM_006235502.3"/>
</dbReference>
<dbReference type="RefSeq" id="XP_006242901.1">
    <property type="nucleotide sequence ID" value="XM_006242839.3"/>
</dbReference>
<dbReference type="RefSeq" id="XP_017447766.1">
    <property type="nucleotide sequence ID" value="XM_017592277.1"/>
</dbReference>
<dbReference type="RefSeq" id="XP_063121387.1">
    <property type="nucleotide sequence ID" value="XM_063265317.1"/>
</dbReference>
<dbReference type="SMR" id="Q75WE7"/>
<dbReference type="FunCoup" id="Q75WE7">
    <property type="interactions" value="883"/>
</dbReference>
<dbReference type="STRING" id="10116.ENSRNOP00000000211"/>
<dbReference type="iPTMnet" id="Q75WE7"/>
<dbReference type="PhosphoSitePlus" id="Q75WE7"/>
<dbReference type="jPOST" id="Q75WE7"/>
<dbReference type="PaxDb" id="10116-ENSRNOP00000000211"/>
<dbReference type="GeneID" id="301097"/>
<dbReference type="UCSC" id="RGD:735145">
    <property type="organism name" value="rat"/>
</dbReference>
<dbReference type="AGR" id="RGD:735145"/>
<dbReference type="RGD" id="735145">
    <property type="gene designation" value="Vwa5a"/>
</dbReference>
<dbReference type="eggNOG" id="ENOG502QRPK">
    <property type="taxonomic scope" value="Eukaryota"/>
</dbReference>
<dbReference type="HOGENOM" id="CLU_003826_4_0_1"/>
<dbReference type="InParanoid" id="Q75WE7"/>
<dbReference type="OrthoDB" id="1729737at2759"/>
<dbReference type="PhylomeDB" id="Q75WE7"/>
<dbReference type="TreeFam" id="TF329720"/>
<dbReference type="PRO" id="PR:Q75WE7"/>
<dbReference type="Proteomes" id="UP000002494">
    <property type="component" value="Unplaced"/>
</dbReference>
<dbReference type="CDD" id="cd01461">
    <property type="entry name" value="vWA_interalpha_trypsin_inhibitor"/>
    <property type="match status" value="1"/>
</dbReference>
<dbReference type="FunFam" id="3.40.50.410:FF:000069">
    <property type="entry name" value="von Willebrand factor A domain containing 5A"/>
    <property type="match status" value="1"/>
</dbReference>
<dbReference type="Gene3D" id="3.40.50.410">
    <property type="entry name" value="von Willebrand factor, type A domain"/>
    <property type="match status" value="1"/>
</dbReference>
<dbReference type="InterPro" id="IPR013694">
    <property type="entry name" value="VIT"/>
</dbReference>
<dbReference type="InterPro" id="IPR002035">
    <property type="entry name" value="VWF_A"/>
</dbReference>
<dbReference type="InterPro" id="IPR036465">
    <property type="entry name" value="vWFA_dom_sf"/>
</dbReference>
<dbReference type="PANTHER" id="PTHR45737">
    <property type="entry name" value="VON WILLEBRAND FACTOR A DOMAIN-CONTAINING PROTEIN 5A"/>
    <property type="match status" value="1"/>
</dbReference>
<dbReference type="PANTHER" id="PTHR45737:SF3">
    <property type="entry name" value="VON WILLEBRAND FACTOR A DOMAIN-CONTAINING PROTEIN 5A"/>
    <property type="match status" value="1"/>
</dbReference>
<dbReference type="Pfam" id="PF08487">
    <property type="entry name" value="VIT"/>
    <property type="match status" value="1"/>
</dbReference>
<dbReference type="Pfam" id="PF13768">
    <property type="entry name" value="VWA_3"/>
    <property type="match status" value="1"/>
</dbReference>
<dbReference type="SMART" id="SM00609">
    <property type="entry name" value="VIT"/>
    <property type="match status" value="1"/>
</dbReference>
<dbReference type="SMART" id="SM00327">
    <property type="entry name" value="VWA"/>
    <property type="match status" value="1"/>
</dbReference>
<dbReference type="SUPFAM" id="SSF53300">
    <property type="entry name" value="vWA-like"/>
    <property type="match status" value="1"/>
</dbReference>
<dbReference type="PROSITE" id="PS51468">
    <property type="entry name" value="VIT"/>
    <property type="match status" value="1"/>
</dbReference>
<dbReference type="PROSITE" id="PS50234">
    <property type="entry name" value="VWFA"/>
    <property type="match status" value="1"/>
</dbReference>
<protein>
    <recommendedName>
        <fullName>von Willebrand factor A domain-containing protein 5A</fullName>
    </recommendedName>
    <alternativeName>
        <fullName>Loss of heterozygosity 11 chromosomal region 2 gene A protein homolog</fullName>
    </alternativeName>
    <alternativeName>
        <fullName>Mast cell surface antigen 1</fullName>
        <shortName>Masa-1</shortName>
    </alternativeName>
</protein>
<proteinExistence type="evidence at transcript level"/>
<evidence type="ECO:0000250" key="1"/>
<evidence type="ECO:0000255" key="2">
    <source>
        <dbReference type="PROSITE-ProRule" id="PRU00219"/>
    </source>
</evidence>
<evidence type="ECO:0000255" key="3">
    <source>
        <dbReference type="PROSITE-ProRule" id="PRU00801"/>
    </source>
</evidence>
<evidence type="ECO:0000256" key="4">
    <source>
        <dbReference type="SAM" id="MobiDB-lite"/>
    </source>
</evidence>